<dbReference type="EC" id="5.2.1.8"/>
<dbReference type="EMBL" id="CH476750">
    <property type="protein sequence ID" value="EIE91610.1"/>
    <property type="molecule type" value="Genomic_DNA"/>
</dbReference>
<dbReference type="SMR" id="P0C1H9"/>
<dbReference type="FunCoup" id="P0C1H9">
    <property type="interactions" value="251"/>
</dbReference>
<dbReference type="STRING" id="246409.P0C1H9"/>
<dbReference type="GlyCosmos" id="P0C1H9">
    <property type="glycosylation" value="1 site, No reported glycans"/>
</dbReference>
<dbReference type="VEuPathDB" id="FungiDB:RO3G_16321"/>
<dbReference type="eggNOG" id="KOG0880">
    <property type="taxonomic scope" value="Eukaryota"/>
</dbReference>
<dbReference type="InParanoid" id="P0C1H9"/>
<dbReference type="OMA" id="CSIINSG"/>
<dbReference type="OrthoDB" id="36478at4827"/>
<dbReference type="Proteomes" id="UP000009138">
    <property type="component" value="Unassembled WGS sequence"/>
</dbReference>
<dbReference type="GO" id="GO:0005788">
    <property type="term" value="C:endoplasmic reticulum lumen"/>
    <property type="evidence" value="ECO:0007669"/>
    <property type="project" value="UniProtKB-SubCell"/>
</dbReference>
<dbReference type="GO" id="GO:0000324">
    <property type="term" value="C:fungal-type vacuole"/>
    <property type="evidence" value="ECO:0007669"/>
    <property type="project" value="TreeGrafter"/>
</dbReference>
<dbReference type="GO" id="GO:0016018">
    <property type="term" value="F:cyclosporin A binding"/>
    <property type="evidence" value="ECO:0007669"/>
    <property type="project" value="TreeGrafter"/>
</dbReference>
<dbReference type="GO" id="GO:0003755">
    <property type="term" value="F:peptidyl-prolyl cis-trans isomerase activity"/>
    <property type="evidence" value="ECO:0007669"/>
    <property type="project" value="UniProtKB-KW"/>
</dbReference>
<dbReference type="GO" id="GO:0006457">
    <property type="term" value="P:protein folding"/>
    <property type="evidence" value="ECO:0007669"/>
    <property type="project" value="InterPro"/>
</dbReference>
<dbReference type="CDD" id="cd01926">
    <property type="entry name" value="cyclophilin_ABH_like"/>
    <property type="match status" value="1"/>
</dbReference>
<dbReference type="FunFam" id="2.40.100.10:FF:000001">
    <property type="entry name" value="Peptidyl-prolyl cis-trans isomerase"/>
    <property type="match status" value="1"/>
</dbReference>
<dbReference type="Gene3D" id="2.40.100.10">
    <property type="entry name" value="Cyclophilin-like"/>
    <property type="match status" value="1"/>
</dbReference>
<dbReference type="InterPro" id="IPR029000">
    <property type="entry name" value="Cyclophilin-like_dom_sf"/>
</dbReference>
<dbReference type="InterPro" id="IPR020892">
    <property type="entry name" value="Cyclophilin-type_PPIase_CS"/>
</dbReference>
<dbReference type="InterPro" id="IPR002130">
    <property type="entry name" value="Cyclophilin-type_PPIase_dom"/>
</dbReference>
<dbReference type="PANTHER" id="PTHR11071">
    <property type="entry name" value="PEPTIDYL-PROLYL CIS-TRANS ISOMERASE"/>
    <property type="match status" value="1"/>
</dbReference>
<dbReference type="PANTHER" id="PTHR11071:SF561">
    <property type="entry name" value="PEPTIDYL-PROLYL CIS-TRANS ISOMERASE D-RELATED"/>
    <property type="match status" value="1"/>
</dbReference>
<dbReference type="Pfam" id="PF00160">
    <property type="entry name" value="Pro_isomerase"/>
    <property type="match status" value="1"/>
</dbReference>
<dbReference type="PRINTS" id="PR00153">
    <property type="entry name" value="CSAPPISMRASE"/>
</dbReference>
<dbReference type="SUPFAM" id="SSF50891">
    <property type="entry name" value="Cyclophilin-like"/>
    <property type="match status" value="1"/>
</dbReference>
<dbReference type="PROSITE" id="PS00170">
    <property type="entry name" value="CSA_PPIASE_1"/>
    <property type="match status" value="1"/>
</dbReference>
<dbReference type="PROSITE" id="PS50072">
    <property type="entry name" value="CSA_PPIASE_2"/>
    <property type="match status" value="1"/>
</dbReference>
<organism>
    <name type="scientific">Rhizopus delemar (strain RA 99-880 / ATCC MYA-4621 / FGSC 9543 / NRRL 43880)</name>
    <name type="common">Mucormycosis agent</name>
    <name type="synonym">Rhizopus arrhizus var. delemar</name>
    <dbReference type="NCBI Taxonomy" id="246409"/>
    <lineage>
        <taxon>Eukaryota</taxon>
        <taxon>Fungi</taxon>
        <taxon>Fungi incertae sedis</taxon>
        <taxon>Mucoromycota</taxon>
        <taxon>Mucoromycotina</taxon>
        <taxon>Mucoromycetes</taxon>
        <taxon>Mucorales</taxon>
        <taxon>Mucorineae</taxon>
        <taxon>Rhizopodaceae</taxon>
        <taxon>Rhizopus</taxon>
    </lineage>
</organism>
<evidence type="ECO:0000250" key="1"/>
<evidence type="ECO:0000255" key="2"/>
<evidence type="ECO:0000255" key="3">
    <source>
        <dbReference type="PROSITE-ProRule" id="PRU00156"/>
    </source>
</evidence>
<evidence type="ECO:0000305" key="4"/>
<sequence>MARFNLATLLVTLFLAVCTFSFVSAEGRGPVITDKIYFDIKQGDESLGRIVLGLYGKTVPKTAENFKQLATGENGYGYKGSTFHRVIKKFMIQGGDFTNHDGTGGKSIYGNRFADENFKLRHSTPGLLSMANAGRDTNGSQFFITTVVTPWLDGKHVVFGRVLEGMDVVTKIENTPTGSRSKPSVDVVIADCGLLPDEPAKEAAEHAEL</sequence>
<name>PPIB1_RHIO9</name>
<gene>
    <name type="primary">cyp8</name>
    <name type="ORF">RO3G_16321</name>
</gene>
<feature type="signal peptide" evidence="2">
    <location>
        <begin position="1"/>
        <end position="25"/>
    </location>
</feature>
<feature type="chain" id="PRO_0000244712" description="Peptidyl-prolyl cis-trans isomerase B1">
    <location>
        <begin position="26"/>
        <end position="209"/>
    </location>
</feature>
<feature type="domain" description="PPIase cyclophilin-type" evidence="3">
    <location>
        <begin position="37"/>
        <end position="194"/>
    </location>
</feature>
<feature type="short sequence motif" description="Prevents secretion from ER">
    <location>
        <begin position="206"/>
        <end position="209"/>
    </location>
</feature>
<feature type="glycosylation site" description="N-linked (GlcNAc...) asparagine" evidence="2">
    <location>
        <position position="138"/>
    </location>
</feature>
<keyword id="KW-0256">Endoplasmic reticulum</keyword>
<keyword id="KW-0325">Glycoprotein</keyword>
<keyword id="KW-0413">Isomerase</keyword>
<keyword id="KW-1185">Reference proteome</keyword>
<keyword id="KW-0697">Rotamase</keyword>
<keyword id="KW-0732">Signal</keyword>
<reference key="1">
    <citation type="journal article" date="2009" name="PLoS Genet.">
        <title>Genomic analysis of the basal lineage fungus Rhizopus oryzae reveals a whole-genome duplication.</title>
        <authorList>
            <person name="Ma L.-J."/>
            <person name="Ibrahim A.S."/>
            <person name="Skory C."/>
            <person name="Grabherr M.G."/>
            <person name="Burger G."/>
            <person name="Butler M."/>
            <person name="Elias M."/>
            <person name="Idnurm A."/>
            <person name="Lang B.F."/>
            <person name="Sone T."/>
            <person name="Abe A."/>
            <person name="Calvo S.E."/>
            <person name="Corrochano L.M."/>
            <person name="Engels R."/>
            <person name="Fu J."/>
            <person name="Hansberg W."/>
            <person name="Kim J.-M."/>
            <person name="Kodira C.D."/>
            <person name="Koehrsen M.J."/>
            <person name="Liu B."/>
            <person name="Miranda-Saavedra D."/>
            <person name="O'Leary S."/>
            <person name="Ortiz-Castellanos L."/>
            <person name="Poulter R."/>
            <person name="Rodriguez-Romero J."/>
            <person name="Ruiz-Herrera J."/>
            <person name="Shen Y.-Q."/>
            <person name="Zeng Q."/>
            <person name="Galagan J."/>
            <person name="Birren B.W."/>
            <person name="Cuomo C.A."/>
            <person name="Wickes B.L."/>
        </authorList>
    </citation>
    <scope>NUCLEOTIDE SEQUENCE [LARGE SCALE GENOMIC DNA]</scope>
    <source>
        <strain>RA 99-880 / ATCC MYA-4621 / FGSC 9543 / NRRL 43880</strain>
    </source>
</reference>
<comment type="function">
    <text evidence="1">PPIases accelerate the folding of proteins. It catalyzes the cis-trans isomerization of proline imidic peptide bonds in oligopeptides (By similarity).</text>
</comment>
<comment type="catalytic activity">
    <reaction>
        <text>[protein]-peptidylproline (omega=180) = [protein]-peptidylproline (omega=0)</text>
        <dbReference type="Rhea" id="RHEA:16237"/>
        <dbReference type="Rhea" id="RHEA-COMP:10747"/>
        <dbReference type="Rhea" id="RHEA-COMP:10748"/>
        <dbReference type="ChEBI" id="CHEBI:83833"/>
        <dbReference type="ChEBI" id="CHEBI:83834"/>
        <dbReference type="EC" id="5.2.1.8"/>
    </reaction>
</comment>
<comment type="activity regulation">
    <text evidence="1">Inhibited by cyclosporin A (CsA).</text>
</comment>
<comment type="subcellular location">
    <subcellularLocation>
        <location evidence="1">Endoplasmic reticulum lumen</location>
    </subcellularLocation>
</comment>
<comment type="similarity">
    <text evidence="4">Belongs to the cyclophilin-type PPIase family. PPIase B subfamily.</text>
</comment>
<protein>
    <recommendedName>
        <fullName>Peptidyl-prolyl cis-trans isomerase B1</fullName>
        <shortName>PPIase B1</shortName>
        <ecNumber>5.2.1.8</ecNumber>
    </recommendedName>
    <alternativeName>
        <fullName>Cyclophilin B1</fullName>
    </alternativeName>
    <alternativeName>
        <fullName>Rotamase B1</fullName>
    </alternativeName>
</protein>
<proteinExistence type="inferred from homology"/>
<accession>P0C1H9</accession>
<accession>I1CT30</accession>